<organism>
    <name type="scientific">Sodalis glossinidius (strain morsitans)</name>
    <dbReference type="NCBI Taxonomy" id="343509"/>
    <lineage>
        <taxon>Bacteria</taxon>
        <taxon>Pseudomonadati</taxon>
        <taxon>Pseudomonadota</taxon>
        <taxon>Gammaproteobacteria</taxon>
        <taxon>Enterobacterales</taxon>
        <taxon>Bruguierivoracaceae</taxon>
        <taxon>Sodalis</taxon>
    </lineage>
</organism>
<sequence length="382" mass="43335">MEYQLLKTDGQARRGRLVFDRGVVETPAFMPVGTYGTVKGMTPEEVKETGAQILLGNTFHLWLRPGQAVMKLHGDLHDFMQWHGPILTDSGGFQVFSLGDIRKITEEGVYFRNPINGDTIFLSPEKSMEIQYDLGSDIVMIFDECTSYPSDWDYAKQSMEMSLRWAARSRQRFDELGNHNALFGIIQGSVYEDLRDVSVKRLVEIGFDGYAVGGLAVGEPKADMHRILAHLCPQIPADKPRYLMGVGKPEDLVEGVRRGIDMFDCVMPTRNARNGHLFVTDGVVKIRNARYKDDVAPLDAECDCYTCRNYSRAYLHHLDRCNEILGARLNTIHNLRYYQRLMAGLRQAIDEGKLEHFVGEFYRRTGKPAPPLVVELHNNEGI</sequence>
<reference key="1">
    <citation type="journal article" date="2006" name="Genome Res.">
        <title>Massive genome erosion and functional adaptations provide insights into the symbiotic lifestyle of Sodalis glossinidius in the tsetse host.</title>
        <authorList>
            <person name="Toh H."/>
            <person name="Weiss B.L."/>
            <person name="Perkin S.A.H."/>
            <person name="Yamashita A."/>
            <person name="Oshima K."/>
            <person name="Hattori M."/>
            <person name="Aksoy S."/>
        </authorList>
    </citation>
    <scope>NUCLEOTIDE SEQUENCE [LARGE SCALE GENOMIC DNA]</scope>
    <source>
        <strain>morsitans</strain>
    </source>
</reference>
<name>TGT_SODGM</name>
<protein>
    <recommendedName>
        <fullName evidence="1">Queuine tRNA-ribosyltransferase</fullName>
        <ecNumber evidence="1">2.4.2.29</ecNumber>
    </recommendedName>
    <alternativeName>
        <fullName evidence="1">Guanine insertion enzyme</fullName>
    </alternativeName>
    <alternativeName>
        <fullName evidence="1">tRNA-guanine transglycosylase</fullName>
    </alternativeName>
</protein>
<comment type="function">
    <text evidence="1">Catalyzes the base-exchange of a guanine (G) residue with the queuine precursor 7-aminomethyl-7-deazaguanine (PreQ1) at position 34 (anticodon wobble position) in tRNAs with GU(N) anticodons (tRNA-Asp, -Asn, -His and -Tyr). Catalysis occurs through a double-displacement mechanism. The nucleophile active site attacks the C1' of nucleotide 34 to detach the guanine base from the RNA, forming a covalent enzyme-RNA intermediate. The proton acceptor active site deprotonates the incoming PreQ1, allowing a nucleophilic attack on the C1' of the ribose to form the product. After dissociation, two additional enzymatic reactions on the tRNA convert PreQ1 to queuine (Q), resulting in the hypermodified nucleoside queuosine (7-(((4,5-cis-dihydroxy-2-cyclopenten-1-yl)amino)methyl)-7-deazaguanosine).</text>
</comment>
<comment type="catalytic activity">
    <reaction evidence="1">
        <text>7-aminomethyl-7-carbaguanine + guanosine(34) in tRNA = 7-aminomethyl-7-carbaguanosine(34) in tRNA + guanine</text>
        <dbReference type="Rhea" id="RHEA:24104"/>
        <dbReference type="Rhea" id="RHEA-COMP:10341"/>
        <dbReference type="Rhea" id="RHEA-COMP:10342"/>
        <dbReference type="ChEBI" id="CHEBI:16235"/>
        <dbReference type="ChEBI" id="CHEBI:58703"/>
        <dbReference type="ChEBI" id="CHEBI:74269"/>
        <dbReference type="ChEBI" id="CHEBI:82833"/>
        <dbReference type="EC" id="2.4.2.29"/>
    </reaction>
</comment>
<comment type="cofactor">
    <cofactor evidence="1">
        <name>Zn(2+)</name>
        <dbReference type="ChEBI" id="CHEBI:29105"/>
    </cofactor>
    <text evidence="1">Binds 1 zinc ion per subunit.</text>
</comment>
<comment type="pathway">
    <text evidence="1">tRNA modification; tRNA-queuosine biosynthesis.</text>
</comment>
<comment type="subunit">
    <text evidence="1">Homodimer. Within each dimer, one monomer is responsible for RNA recognition and catalysis, while the other monomer binds to the replacement base PreQ1.</text>
</comment>
<comment type="similarity">
    <text evidence="1">Belongs to the queuine tRNA-ribosyltransferase family.</text>
</comment>
<accession>Q2NVA4</accession>
<keyword id="KW-0328">Glycosyltransferase</keyword>
<keyword id="KW-0479">Metal-binding</keyword>
<keyword id="KW-0671">Queuosine biosynthesis</keyword>
<keyword id="KW-0808">Transferase</keyword>
<keyword id="KW-0819">tRNA processing</keyword>
<keyword id="KW-0862">Zinc</keyword>
<evidence type="ECO:0000255" key="1">
    <source>
        <dbReference type="HAMAP-Rule" id="MF_00168"/>
    </source>
</evidence>
<gene>
    <name evidence="1" type="primary">tgt</name>
    <name type="ordered locus">SG0646</name>
</gene>
<dbReference type="EC" id="2.4.2.29" evidence="1"/>
<dbReference type="EMBL" id="AP008232">
    <property type="protein sequence ID" value="BAE73921.1"/>
    <property type="molecule type" value="Genomic_DNA"/>
</dbReference>
<dbReference type="RefSeq" id="WP_011410399.1">
    <property type="nucleotide sequence ID" value="NC_007712.1"/>
</dbReference>
<dbReference type="SMR" id="Q2NVA4"/>
<dbReference type="STRING" id="343509.SG0646"/>
<dbReference type="KEGG" id="sgl:SG0646"/>
<dbReference type="eggNOG" id="COG0343">
    <property type="taxonomic scope" value="Bacteria"/>
</dbReference>
<dbReference type="HOGENOM" id="CLU_022060_0_1_6"/>
<dbReference type="OrthoDB" id="9805417at2"/>
<dbReference type="BioCyc" id="SGLO343509:SGP1_RS05625-MONOMER"/>
<dbReference type="UniPathway" id="UPA00392"/>
<dbReference type="Proteomes" id="UP000001932">
    <property type="component" value="Chromosome"/>
</dbReference>
<dbReference type="GO" id="GO:0005829">
    <property type="term" value="C:cytosol"/>
    <property type="evidence" value="ECO:0007669"/>
    <property type="project" value="TreeGrafter"/>
</dbReference>
<dbReference type="GO" id="GO:0046872">
    <property type="term" value="F:metal ion binding"/>
    <property type="evidence" value="ECO:0007669"/>
    <property type="project" value="UniProtKB-KW"/>
</dbReference>
<dbReference type="GO" id="GO:0008479">
    <property type="term" value="F:tRNA-guanosine(34) queuine transglycosylase activity"/>
    <property type="evidence" value="ECO:0007669"/>
    <property type="project" value="UniProtKB-UniRule"/>
</dbReference>
<dbReference type="GO" id="GO:0008616">
    <property type="term" value="P:queuosine biosynthetic process"/>
    <property type="evidence" value="ECO:0007669"/>
    <property type="project" value="UniProtKB-UniRule"/>
</dbReference>
<dbReference type="GO" id="GO:0002099">
    <property type="term" value="P:tRNA wobble guanine modification"/>
    <property type="evidence" value="ECO:0007669"/>
    <property type="project" value="TreeGrafter"/>
</dbReference>
<dbReference type="GO" id="GO:0101030">
    <property type="term" value="P:tRNA-guanine transglycosylation"/>
    <property type="evidence" value="ECO:0007669"/>
    <property type="project" value="InterPro"/>
</dbReference>
<dbReference type="FunFam" id="3.20.20.105:FF:000001">
    <property type="entry name" value="Queuine tRNA-ribosyltransferase"/>
    <property type="match status" value="1"/>
</dbReference>
<dbReference type="Gene3D" id="3.20.20.105">
    <property type="entry name" value="Queuine tRNA-ribosyltransferase-like"/>
    <property type="match status" value="1"/>
</dbReference>
<dbReference type="HAMAP" id="MF_00168">
    <property type="entry name" value="Q_tRNA_Tgt"/>
    <property type="match status" value="1"/>
</dbReference>
<dbReference type="InterPro" id="IPR050076">
    <property type="entry name" value="ArchSynthase1/Queuine_TRR"/>
</dbReference>
<dbReference type="InterPro" id="IPR004803">
    <property type="entry name" value="TGT"/>
</dbReference>
<dbReference type="InterPro" id="IPR036511">
    <property type="entry name" value="TGT-like_sf"/>
</dbReference>
<dbReference type="InterPro" id="IPR002616">
    <property type="entry name" value="tRNA_ribo_trans-like"/>
</dbReference>
<dbReference type="NCBIfam" id="TIGR00430">
    <property type="entry name" value="Q_tRNA_tgt"/>
    <property type="match status" value="1"/>
</dbReference>
<dbReference type="NCBIfam" id="TIGR00449">
    <property type="entry name" value="tgt_general"/>
    <property type="match status" value="1"/>
</dbReference>
<dbReference type="PANTHER" id="PTHR46499">
    <property type="entry name" value="QUEUINE TRNA-RIBOSYLTRANSFERASE"/>
    <property type="match status" value="1"/>
</dbReference>
<dbReference type="PANTHER" id="PTHR46499:SF1">
    <property type="entry name" value="QUEUINE TRNA-RIBOSYLTRANSFERASE"/>
    <property type="match status" value="1"/>
</dbReference>
<dbReference type="Pfam" id="PF01702">
    <property type="entry name" value="TGT"/>
    <property type="match status" value="1"/>
</dbReference>
<dbReference type="SUPFAM" id="SSF51713">
    <property type="entry name" value="tRNA-guanine transglycosylase"/>
    <property type="match status" value="1"/>
</dbReference>
<feature type="chain" id="PRO_1000016859" description="Queuine tRNA-ribosyltransferase">
    <location>
        <begin position="1"/>
        <end position="382"/>
    </location>
</feature>
<feature type="region of interest" description="RNA binding" evidence="1">
    <location>
        <begin position="245"/>
        <end position="251"/>
    </location>
</feature>
<feature type="region of interest" description="RNA binding; important for wobble base 34 recognition" evidence="1">
    <location>
        <begin position="269"/>
        <end position="273"/>
    </location>
</feature>
<feature type="active site" description="Proton acceptor" evidence="1">
    <location>
        <position position="89"/>
    </location>
</feature>
<feature type="active site" description="Nucleophile" evidence="1">
    <location>
        <position position="264"/>
    </location>
</feature>
<feature type="binding site" evidence="1">
    <location>
        <begin position="89"/>
        <end position="93"/>
    </location>
    <ligand>
        <name>substrate</name>
    </ligand>
</feature>
<feature type="binding site" evidence="1">
    <location>
        <position position="143"/>
    </location>
    <ligand>
        <name>substrate</name>
    </ligand>
</feature>
<feature type="binding site" evidence="1">
    <location>
        <position position="187"/>
    </location>
    <ligand>
        <name>substrate</name>
    </ligand>
</feature>
<feature type="binding site" evidence="1">
    <location>
        <position position="214"/>
    </location>
    <ligand>
        <name>substrate</name>
    </ligand>
</feature>
<feature type="binding site" evidence="1">
    <location>
        <position position="302"/>
    </location>
    <ligand>
        <name>Zn(2+)</name>
        <dbReference type="ChEBI" id="CHEBI:29105"/>
    </ligand>
</feature>
<feature type="binding site" evidence="1">
    <location>
        <position position="304"/>
    </location>
    <ligand>
        <name>Zn(2+)</name>
        <dbReference type="ChEBI" id="CHEBI:29105"/>
    </ligand>
</feature>
<feature type="binding site" evidence="1">
    <location>
        <position position="307"/>
    </location>
    <ligand>
        <name>Zn(2+)</name>
        <dbReference type="ChEBI" id="CHEBI:29105"/>
    </ligand>
</feature>
<feature type="binding site" evidence="1">
    <location>
        <position position="333"/>
    </location>
    <ligand>
        <name>Zn(2+)</name>
        <dbReference type="ChEBI" id="CHEBI:29105"/>
    </ligand>
</feature>
<proteinExistence type="inferred from homology"/>